<keyword id="KW-1185">Reference proteome</keyword>
<sequence>MLIVYYSLTGNVKRFIQKTKYTNTLTLDQAEGINEPYIIVTGTIGFGEIPDPVRQFLDRHSANLLAVAASGNRNWGQNYARAGDLISSTYHVPLLMKFELHGNDNDVKEFNIKVEEISEYHTRETVQSY</sequence>
<comment type="function">
    <text evidence="1">Probably involved in ribonucleotide reductase function.</text>
</comment>
<comment type="similarity">
    <text evidence="1">Belongs to the NrdI family.</text>
</comment>
<reference key="1">
    <citation type="journal article" date="2009" name="J. Bacteriol.">
        <title>Complete genome sequence of Macrococcus caseolyticus strain JCSCS5402, reflecting the ancestral genome of the human-pathogenic staphylococci.</title>
        <authorList>
            <person name="Baba T."/>
            <person name="Kuwahara-Arai K."/>
            <person name="Uchiyama I."/>
            <person name="Takeuchi F."/>
            <person name="Ito T."/>
            <person name="Hiramatsu K."/>
        </authorList>
    </citation>
    <scope>NUCLEOTIDE SEQUENCE [LARGE SCALE GENOMIC DNA]</scope>
    <source>
        <strain>JCSC5402</strain>
    </source>
</reference>
<organism>
    <name type="scientific">Macrococcus caseolyticus (strain JCSC5402)</name>
    <name type="common">Macrococcoides caseolyticum</name>
    <dbReference type="NCBI Taxonomy" id="458233"/>
    <lineage>
        <taxon>Bacteria</taxon>
        <taxon>Bacillati</taxon>
        <taxon>Bacillota</taxon>
        <taxon>Bacilli</taxon>
        <taxon>Bacillales</taxon>
        <taxon>Staphylococcaceae</taxon>
        <taxon>Macrococcoides</taxon>
    </lineage>
</organism>
<feature type="chain" id="PRO_1000191758" description="Protein NrdI">
    <location>
        <begin position="1"/>
        <end position="129"/>
    </location>
</feature>
<evidence type="ECO:0000255" key="1">
    <source>
        <dbReference type="HAMAP-Rule" id="MF_00128"/>
    </source>
</evidence>
<dbReference type="EMBL" id="AP009484">
    <property type="protein sequence ID" value="BAH17189.1"/>
    <property type="molecule type" value="Genomic_DNA"/>
</dbReference>
<dbReference type="RefSeq" id="WP_012656390.1">
    <property type="nucleotide sequence ID" value="NC_011999.1"/>
</dbReference>
<dbReference type="SMR" id="B9EAC8"/>
<dbReference type="STRING" id="458233.MCCL_0482"/>
<dbReference type="GeneID" id="61129720"/>
<dbReference type="KEGG" id="mcl:MCCL_0482"/>
<dbReference type="eggNOG" id="COG1780">
    <property type="taxonomic scope" value="Bacteria"/>
</dbReference>
<dbReference type="HOGENOM" id="CLU_114845_3_0_9"/>
<dbReference type="OrthoDB" id="350535at2"/>
<dbReference type="Proteomes" id="UP000001383">
    <property type="component" value="Chromosome"/>
</dbReference>
<dbReference type="GO" id="GO:0010181">
    <property type="term" value="F:FMN binding"/>
    <property type="evidence" value="ECO:0007669"/>
    <property type="project" value="InterPro"/>
</dbReference>
<dbReference type="GO" id="GO:0036211">
    <property type="term" value="P:protein modification process"/>
    <property type="evidence" value="ECO:0007669"/>
    <property type="project" value="InterPro"/>
</dbReference>
<dbReference type="Gene3D" id="3.40.50.360">
    <property type="match status" value="1"/>
</dbReference>
<dbReference type="HAMAP" id="MF_00128">
    <property type="entry name" value="NrdI"/>
    <property type="match status" value="1"/>
</dbReference>
<dbReference type="InterPro" id="IPR029039">
    <property type="entry name" value="Flavoprotein-like_sf"/>
</dbReference>
<dbReference type="InterPro" id="IPR020852">
    <property type="entry name" value="RNR_Ib_NrdI_bac"/>
</dbReference>
<dbReference type="InterPro" id="IPR004465">
    <property type="entry name" value="RNR_NrdI"/>
</dbReference>
<dbReference type="NCBIfam" id="TIGR00333">
    <property type="entry name" value="nrdI"/>
    <property type="match status" value="1"/>
</dbReference>
<dbReference type="PANTHER" id="PTHR37297">
    <property type="entry name" value="PROTEIN NRDI"/>
    <property type="match status" value="1"/>
</dbReference>
<dbReference type="PANTHER" id="PTHR37297:SF1">
    <property type="entry name" value="PROTEIN NRDI"/>
    <property type="match status" value="1"/>
</dbReference>
<dbReference type="Pfam" id="PF07972">
    <property type="entry name" value="Flavodoxin_NdrI"/>
    <property type="match status" value="1"/>
</dbReference>
<dbReference type="PIRSF" id="PIRSF005087">
    <property type="entry name" value="NrdI"/>
    <property type="match status" value="1"/>
</dbReference>
<dbReference type="SUPFAM" id="SSF52218">
    <property type="entry name" value="Flavoproteins"/>
    <property type="match status" value="1"/>
</dbReference>
<proteinExistence type="inferred from homology"/>
<gene>
    <name evidence="1" type="primary">nrdI</name>
    <name type="ordered locus">MCCL_0482</name>
</gene>
<accession>B9EAC8</accession>
<protein>
    <recommendedName>
        <fullName evidence="1">Protein NrdI</fullName>
    </recommendedName>
</protein>
<name>NRDI_MACCJ</name>